<accession>Q98N68</accession>
<sequence>MDRAEKRELVTGLNEAFGNAGSVVVAHYAGITVAQMNDLRSKMRAAGGTVKVAKNRLAKIALQGTDSASIIDLFKGQTLIAYSEDPIAAPKVASDFAKGNDKLVILGGAMGTTSLNADGVKALATLPSLDELRAKLVGMIATPATRIAQIVNAPAASVARVIGAYARKDEAA</sequence>
<dbReference type="EMBL" id="BA000012">
    <property type="protein sequence ID" value="BAB47894.1"/>
    <property type="molecule type" value="Genomic_DNA"/>
</dbReference>
<dbReference type="RefSeq" id="WP_010909264.1">
    <property type="nucleotide sequence ID" value="NC_002678.2"/>
</dbReference>
<dbReference type="SMR" id="Q98N68"/>
<dbReference type="GeneID" id="66684229"/>
<dbReference type="KEGG" id="mlo:mlr0274"/>
<dbReference type="eggNOG" id="COG0244">
    <property type="taxonomic scope" value="Bacteria"/>
</dbReference>
<dbReference type="HOGENOM" id="CLU_092227_0_0_5"/>
<dbReference type="Proteomes" id="UP000000552">
    <property type="component" value="Chromosome"/>
</dbReference>
<dbReference type="GO" id="GO:0015934">
    <property type="term" value="C:large ribosomal subunit"/>
    <property type="evidence" value="ECO:0007669"/>
    <property type="project" value="InterPro"/>
</dbReference>
<dbReference type="GO" id="GO:0070180">
    <property type="term" value="F:large ribosomal subunit rRNA binding"/>
    <property type="evidence" value="ECO:0007669"/>
    <property type="project" value="UniProtKB-UniRule"/>
</dbReference>
<dbReference type="GO" id="GO:0003735">
    <property type="term" value="F:structural constituent of ribosome"/>
    <property type="evidence" value="ECO:0007669"/>
    <property type="project" value="InterPro"/>
</dbReference>
<dbReference type="GO" id="GO:0006412">
    <property type="term" value="P:translation"/>
    <property type="evidence" value="ECO:0007669"/>
    <property type="project" value="UniProtKB-UniRule"/>
</dbReference>
<dbReference type="CDD" id="cd05797">
    <property type="entry name" value="Ribosomal_L10"/>
    <property type="match status" value="1"/>
</dbReference>
<dbReference type="Gene3D" id="3.30.70.1730">
    <property type="match status" value="1"/>
</dbReference>
<dbReference type="Gene3D" id="6.10.250.290">
    <property type="match status" value="1"/>
</dbReference>
<dbReference type="HAMAP" id="MF_00362">
    <property type="entry name" value="Ribosomal_uL10"/>
    <property type="match status" value="1"/>
</dbReference>
<dbReference type="InterPro" id="IPR001790">
    <property type="entry name" value="Ribosomal_uL10"/>
</dbReference>
<dbReference type="InterPro" id="IPR043141">
    <property type="entry name" value="Ribosomal_uL10-like_sf"/>
</dbReference>
<dbReference type="InterPro" id="IPR022973">
    <property type="entry name" value="Ribosomal_uL10_bac"/>
</dbReference>
<dbReference type="InterPro" id="IPR047865">
    <property type="entry name" value="Ribosomal_uL10_bac_type"/>
</dbReference>
<dbReference type="InterPro" id="IPR002363">
    <property type="entry name" value="Ribosomal_uL10_CS_bac"/>
</dbReference>
<dbReference type="NCBIfam" id="NF000955">
    <property type="entry name" value="PRK00099.1-1"/>
    <property type="match status" value="1"/>
</dbReference>
<dbReference type="PANTHER" id="PTHR11560">
    <property type="entry name" value="39S RIBOSOMAL PROTEIN L10, MITOCHONDRIAL"/>
    <property type="match status" value="1"/>
</dbReference>
<dbReference type="Pfam" id="PF00466">
    <property type="entry name" value="Ribosomal_L10"/>
    <property type="match status" value="1"/>
</dbReference>
<dbReference type="SUPFAM" id="SSF160369">
    <property type="entry name" value="Ribosomal protein L10-like"/>
    <property type="match status" value="1"/>
</dbReference>
<dbReference type="PROSITE" id="PS01109">
    <property type="entry name" value="RIBOSOMAL_L10"/>
    <property type="match status" value="1"/>
</dbReference>
<protein>
    <recommendedName>
        <fullName evidence="1">Large ribosomal subunit protein uL10</fullName>
    </recommendedName>
    <alternativeName>
        <fullName evidence="2">50S ribosomal protein L10</fullName>
    </alternativeName>
</protein>
<gene>
    <name evidence="1" type="primary">rplJ</name>
    <name type="ordered locus">mlr0274</name>
</gene>
<comment type="function">
    <text evidence="1">Forms part of the ribosomal stalk, playing a central role in the interaction of the ribosome with GTP-bound translation factors.</text>
</comment>
<comment type="subunit">
    <text evidence="1">Part of the ribosomal stalk of the 50S ribosomal subunit. The N-terminus interacts with L11 and the large rRNA to form the base of the stalk. The C-terminus forms an elongated spine to which L12 dimers bind in a sequential fashion forming a multimeric L10(L12)X complex.</text>
</comment>
<comment type="similarity">
    <text evidence="1">Belongs to the universal ribosomal protein uL10 family.</text>
</comment>
<feature type="chain" id="PRO_0000154694" description="Large ribosomal subunit protein uL10">
    <location>
        <begin position="1"/>
        <end position="172"/>
    </location>
</feature>
<reference key="1">
    <citation type="journal article" date="2000" name="DNA Res.">
        <title>Complete genome structure of the nitrogen-fixing symbiotic bacterium Mesorhizobium loti.</title>
        <authorList>
            <person name="Kaneko T."/>
            <person name="Nakamura Y."/>
            <person name="Sato S."/>
            <person name="Asamizu E."/>
            <person name="Kato T."/>
            <person name="Sasamoto S."/>
            <person name="Watanabe A."/>
            <person name="Idesawa K."/>
            <person name="Ishikawa A."/>
            <person name="Kawashima K."/>
            <person name="Kimura T."/>
            <person name="Kishida Y."/>
            <person name="Kiyokawa C."/>
            <person name="Kohara M."/>
            <person name="Matsumoto M."/>
            <person name="Matsuno A."/>
            <person name="Mochizuki Y."/>
            <person name="Nakayama S."/>
            <person name="Nakazaki N."/>
            <person name="Shimpo S."/>
            <person name="Sugimoto M."/>
            <person name="Takeuchi C."/>
            <person name="Yamada M."/>
            <person name="Tabata S."/>
        </authorList>
    </citation>
    <scope>NUCLEOTIDE SEQUENCE [LARGE SCALE GENOMIC DNA]</scope>
    <source>
        <strain>LMG 29417 / CECT 9101 / MAFF 303099</strain>
    </source>
</reference>
<proteinExistence type="inferred from homology"/>
<organism>
    <name type="scientific">Mesorhizobium japonicum (strain LMG 29417 / CECT 9101 / MAFF 303099)</name>
    <name type="common">Mesorhizobium loti (strain MAFF 303099)</name>
    <dbReference type="NCBI Taxonomy" id="266835"/>
    <lineage>
        <taxon>Bacteria</taxon>
        <taxon>Pseudomonadati</taxon>
        <taxon>Pseudomonadota</taxon>
        <taxon>Alphaproteobacteria</taxon>
        <taxon>Hyphomicrobiales</taxon>
        <taxon>Phyllobacteriaceae</taxon>
        <taxon>Mesorhizobium</taxon>
    </lineage>
</organism>
<keyword id="KW-0687">Ribonucleoprotein</keyword>
<keyword id="KW-0689">Ribosomal protein</keyword>
<keyword id="KW-0694">RNA-binding</keyword>
<keyword id="KW-0699">rRNA-binding</keyword>
<name>RL10_RHILO</name>
<evidence type="ECO:0000255" key="1">
    <source>
        <dbReference type="HAMAP-Rule" id="MF_00362"/>
    </source>
</evidence>
<evidence type="ECO:0000305" key="2"/>